<name>AROC_MARMS</name>
<feature type="chain" id="PRO_1000078998" description="Chorismate synthase">
    <location>
        <begin position="1"/>
        <end position="365"/>
    </location>
</feature>
<feature type="binding site" evidence="1">
    <location>
        <position position="48"/>
    </location>
    <ligand>
        <name>NADP(+)</name>
        <dbReference type="ChEBI" id="CHEBI:58349"/>
    </ligand>
</feature>
<feature type="binding site" evidence="1">
    <location>
        <begin position="125"/>
        <end position="127"/>
    </location>
    <ligand>
        <name>FMN</name>
        <dbReference type="ChEBI" id="CHEBI:58210"/>
    </ligand>
</feature>
<feature type="binding site" evidence="1">
    <location>
        <begin position="238"/>
        <end position="239"/>
    </location>
    <ligand>
        <name>FMN</name>
        <dbReference type="ChEBI" id="CHEBI:58210"/>
    </ligand>
</feature>
<feature type="binding site" evidence="1">
    <location>
        <position position="278"/>
    </location>
    <ligand>
        <name>FMN</name>
        <dbReference type="ChEBI" id="CHEBI:58210"/>
    </ligand>
</feature>
<feature type="binding site" evidence="1">
    <location>
        <begin position="293"/>
        <end position="297"/>
    </location>
    <ligand>
        <name>FMN</name>
        <dbReference type="ChEBI" id="CHEBI:58210"/>
    </ligand>
</feature>
<feature type="binding site" evidence="1">
    <location>
        <position position="319"/>
    </location>
    <ligand>
        <name>FMN</name>
        <dbReference type="ChEBI" id="CHEBI:58210"/>
    </ligand>
</feature>
<protein>
    <recommendedName>
        <fullName evidence="1">Chorismate synthase</fullName>
        <shortName evidence="1">CS</shortName>
        <ecNumber evidence="1">4.2.3.5</ecNumber>
    </recommendedName>
    <alternativeName>
        <fullName evidence="1">5-enolpyruvylshikimate-3-phosphate phospholyase</fullName>
    </alternativeName>
</protein>
<keyword id="KW-0028">Amino-acid biosynthesis</keyword>
<keyword id="KW-0057">Aromatic amino acid biosynthesis</keyword>
<keyword id="KW-0274">FAD</keyword>
<keyword id="KW-0285">Flavoprotein</keyword>
<keyword id="KW-0288">FMN</keyword>
<keyword id="KW-0456">Lyase</keyword>
<keyword id="KW-0521">NADP</keyword>
<organism>
    <name type="scientific">Marinomonas sp. (strain MWYL1)</name>
    <dbReference type="NCBI Taxonomy" id="400668"/>
    <lineage>
        <taxon>Bacteria</taxon>
        <taxon>Pseudomonadati</taxon>
        <taxon>Pseudomonadota</taxon>
        <taxon>Gammaproteobacteria</taxon>
        <taxon>Oceanospirillales</taxon>
        <taxon>Oceanospirillaceae</taxon>
        <taxon>Marinomonas</taxon>
    </lineage>
</organism>
<gene>
    <name evidence="1" type="primary">aroC</name>
    <name type="ordered locus">Mmwyl1_2244</name>
</gene>
<comment type="function">
    <text evidence="1">Catalyzes the anti-1,4-elimination of the C-3 phosphate and the C-6 proR hydrogen from 5-enolpyruvylshikimate-3-phosphate (EPSP) to yield chorismate, which is the branch point compound that serves as the starting substrate for the three terminal pathways of aromatic amino acid biosynthesis. This reaction introduces a second double bond into the aromatic ring system.</text>
</comment>
<comment type="catalytic activity">
    <reaction evidence="1">
        <text>5-O-(1-carboxyvinyl)-3-phosphoshikimate = chorismate + phosphate</text>
        <dbReference type="Rhea" id="RHEA:21020"/>
        <dbReference type="ChEBI" id="CHEBI:29748"/>
        <dbReference type="ChEBI" id="CHEBI:43474"/>
        <dbReference type="ChEBI" id="CHEBI:57701"/>
        <dbReference type="EC" id="4.2.3.5"/>
    </reaction>
</comment>
<comment type="cofactor">
    <cofactor evidence="1">
        <name>FMNH2</name>
        <dbReference type="ChEBI" id="CHEBI:57618"/>
    </cofactor>
    <text evidence="1">Reduced FMN (FMNH(2)).</text>
</comment>
<comment type="pathway">
    <text evidence="1">Metabolic intermediate biosynthesis; chorismate biosynthesis; chorismate from D-erythrose 4-phosphate and phosphoenolpyruvate: step 7/7.</text>
</comment>
<comment type="subunit">
    <text evidence="1">Homotetramer.</text>
</comment>
<comment type="similarity">
    <text evidence="1">Belongs to the chorismate synthase family.</text>
</comment>
<accession>A6VXI7</accession>
<sequence>MSGNTFGTLFKVTTFGESHGLALGAIVDGCPPGIELCEADLQRDLDLRKPGTSKHTTQRREADEVKIMSGVFEGKTTGTPIGLIIENTDQRSKDYGNIADTFRPAHADYTYDQKYGFRDYRGGGRSSARETAMRVAAGAIAKKYLKQQFGIEIQGFLSQLGPIKLEVKDLSQVYDNSFFSPDPDAIPELEEYMTALRREGDSVGAKITVIAKNVMPGLGAPVFDRLDADIAKAIMSINAVKGVEIGDGFDVVEQKGSQHRDEMTPEGFLSNHAGGVLGGISSGQDIVVHMALKPTSSITIPGKSIDRAGNPIEVITKGRHDPCVGIRATPIAEAMLAITIIDHLLRHRAQNADVVCSTPIINGQA</sequence>
<reference key="1">
    <citation type="submission" date="2007-06" db="EMBL/GenBank/DDBJ databases">
        <title>Complete sequence of Marinomonas sp. MWYL1.</title>
        <authorList>
            <consortium name="US DOE Joint Genome Institute"/>
            <person name="Copeland A."/>
            <person name="Lucas S."/>
            <person name="Lapidus A."/>
            <person name="Barry K."/>
            <person name="Glavina del Rio T."/>
            <person name="Dalin E."/>
            <person name="Tice H."/>
            <person name="Pitluck S."/>
            <person name="Kiss H."/>
            <person name="Brettin T."/>
            <person name="Bruce D."/>
            <person name="Detter J.C."/>
            <person name="Han C."/>
            <person name="Schmutz J."/>
            <person name="Larimer F."/>
            <person name="Land M."/>
            <person name="Hauser L."/>
            <person name="Kyrpides N."/>
            <person name="Kim E."/>
            <person name="Johnston A.W.B."/>
            <person name="Todd J.D."/>
            <person name="Rogers R."/>
            <person name="Wexler M."/>
            <person name="Bond P.L."/>
            <person name="Li Y."/>
            <person name="Richardson P."/>
        </authorList>
    </citation>
    <scope>NUCLEOTIDE SEQUENCE [LARGE SCALE GENOMIC DNA]</scope>
    <source>
        <strain>MWYL1</strain>
    </source>
</reference>
<dbReference type="EC" id="4.2.3.5" evidence="1"/>
<dbReference type="EMBL" id="CP000749">
    <property type="protein sequence ID" value="ABR71166.1"/>
    <property type="molecule type" value="Genomic_DNA"/>
</dbReference>
<dbReference type="SMR" id="A6VXI7"/>
<dbReference type="STRING" id="400668.Mmwyl1_2244"/>
<dbReference type="KEGG" id="mmw:Mmwyl1_2244"/>
<dbReference type="eggNOG" id="COG0082">
    <property type="taxonomic scope" value="Bacteria"/>
</dbReference>
<dbReference type="HOGENOM" id="CLU_034547_0_2_6"/>
<dbReference type="OrthoDB" id="9771806at2"/>
<dbReference type="UniPathway" id="UPA00053">
    <property type="reaction ID" value="UER00090"/>
</dbReference>
<dbReference type="GO" id="GO:0005829">
    <property type="term" value="C:cytosol"/>
    <property type="evidence" value="ECO:0007669"/>
    <property type="project" value="TreeGrafter"/>
</dbReference>
<dbReference type="GO" id="GO:0004107">
    <property type="term" value="F:chorismate synthase activity"/>
    <property type="evidence" value="ECO:0007669"/>
    <property type="project" value="UniProtKB-UniRule"/>
</dbReference>
<dbReference type="GO" id="GO:0010181">
    <property type="term" value="F:FMN binding"/>
    <property type="evidence" value="ECO:0007669"/>
    <property type="project" value="TreeGrafter"/>
</dbReference>
<dbReference type="GO" id="GO:0008652">
    <property type="term" value="P:amino acid biosynthetic process"/>
    <property type="evidence" value="ECO:0007669"/>
    <property type="project" value="UniProtKB-KW"/>
</dbReference>
<dbReference type="GO" id="GO:0009073">
    <property type="term" value="P:aromatic amino acid family biosynthetic process"/>
    <property type="evidence" value="ECO:0007669"/>
    <property type="project" value="UniProtKB-KW"/>
</dbReference>
<dbReference type="GO" id="GO:0009423">
    <property type="term" value="P:chorismate biosynthetic process"/>
    <property type="evidence" value="ECO:0007669"/>
    <property type="project" value="UniProtKB-UniRule"/>
</dbReference>
<dbReference type="CDD" id="cd07304">
    <property type="entry name" value="Chorismate_synthase"/>
    <property type="match status" value="1"/>
</dbReference>
<dbReference type="FunFam" id="3.60.150.10:FF:000001">
    <property type="entry name" value="Chorismate synthase"/>
    <property type="match status" value="1"/>
</dbReference>
<dbReference type="Gene3D" id="3.60.150.10">
    <property type="entry name" value="Chorismate synthase AroC"/>
    <property type="match status" value="1"/>
</dbReference>
<dbReference type="HAMAP" id="MF_00300">
    <property type="entry name" value="Chorismate_synth"/>
    <property type="match status" value="1"/>
</dbReference>
<dbReference type="InterPro" id="IPR000453">
    <property type="entry name" value="Chorismate_synth"/>
</dbReference>
<dbReference type="InterPro" id="IPR035904">
    <property type="entry name" value="Chorismate_synth_AroC_sf"/>
</dbReference>
<dbReference type="InterPro" id="IPR020541">
    <property type="entry name" value="Chorismate_synthase_CS"/>
</dbReference>
<dbReference type="NCBIfam" id="TIGR00033">
    <property type="entry name" value="aroC"/>
    <property type="match status" value="1"/>
</dbReference>
<dbReference type="NCBIfam" id="NF003793">
    <property type="entry name" value="PRK05382.1"/>
    <property type="match status" value="1"/>
</dbReference>
<dbReference type="PANTHER" id="PTHR21085">
    <property type="entry name" value="CHORISMATE SYNTHASE"/>
    <property type="match status" value="1"/>
</dbReference>
<dbReference type="PANTHER" id="PTHR21085:SF0">
    <property type="entry name" value="CHORISMATE SYNTHASE"/>
    <property type="match status" value="1"/>
</dbReference>
<dbReference type="Pfam" id="PF01264">
    <property type="entry name" value="Chorismate_synt"/>
    <property type="match status" value="1"/>
</dbReference>
<dbReference type="PIRSF" id="PIRSF001456">
    <property type="entry name" value="Chorismate_synth"/>
    <property type="match status" value="1"/>
</dbReference>
<dbReference type="SUPFAM" id="SSF103263">
    <property type="entry name" value="Chorismate synthase, AroC"/>
    <property type="match status" value="1"/>
</dbReference>
<dbReference type="PROSITE" id="PS00787">
    <property type="entry name" value="CHORISMATE_SYNTHASE_1"/>
    <property type="match status" value="1"/>
</dbReference>
<dbReference type="PROSITE" id="PS00788">
    <property type="entry name" value="CHORISMATE_SYNTHASE_2"/>
    <property type="match status" value="1"/>
</dbReference>
<dbReference type="PROSITE" id="PS00789">
    <property type="entry name" value="CHORISMATE_SYNTHASE_3"/>
    <property type="match status" value="1"/>
</dbReference>
<proteinExistence type="inferred from homology"/>
<evidence type="ECO:0000255" key="1">
    <source>
        <dbReference type="HAMAP-Rule" id="MF_00300"/>
    </source>
</evidence>